<name>TATB_HYPNA</name>
<evidence type="ECO:0000255" key="1">
    <source>
        <dbReference type="HAMAP-Rule" id="MF_00237"/>
    </source>
</evidence>
<evidence type="ECO:0000256" key="2">
    <source>
        <dbReference type="SAM" id="MobiDB-lite"/>
    </source>
</evidence>
<reference key="1">
    <citation type="journal article" date="2006" name="J. Bacteriol.">
        <title>Comparative genomic evidence for a close relationship between the dimorphic prosthecate bacteria Hyphomonas neptunium and Caulobacter crescentus.</title>
        <authorList>
            <person name="Badger J.H."/>
            <person name="Hoover T.R."/>
            <person name="Brun Y.V."/>
            <person name="Weiner R.M."/>
            <person name="Laub M.T."/>
            <person name="Alexandre G."/>
            <person name="Mrazek J."/>
            <person name="Ren Q."/>
            <person name="Paulsen I.T."/>
            <person name="Nelson K.E."/>
            <person name="Khouri H.M."/>
            <person name="Radune D."/>
            <person name="Sosa J."/>
            <person name="Dodson R.J."/>
            <person name="Sullivan S.A."/>
            <person name="Rosovitz M.J."/>
            <person name="Madupu R."/>
            <person name="Brinkac L.M."/>
            <person name="Durkin A.S."/>
            <person name="Daugherty S.C."/>
            <person name="Kothari S.P."/>
            <person name="Giglio M.G."/>
            <person name="Zhou L."/>
            <person name="Haft D.H."/>
            <person name="Selengut J.D."/>
            <person name="Davidsen T.M."/>
            <person name="Yang Q."/>
            <person name="Zafar N."/>
            <person name="Ward N.L."/>
        </authorList>
    </citation>
    <scope>NUCLEOTIDE SEQUENCE [LARGE SCALE GENOMIC DNA]</scope>
    <source>
        <strain>ATCC 15444</strain>
    </source>
</reference>
<keyword id="KW-0997">Cell inner membrane</keyword>
<keyword id="KW-1003">Cell membrane</keyword>
<keyword id="KW-0472">Membrane</keyword>
<keyword id="KW-0653">Protein transport</keyword>
<keyword id="KW-1185">Reference proteome</keyword>
<keyword id="KW-0811">Translocation</keyword>
<keyword id="KW-0812">Transmembrane</keyword>
<keyword id="KW-1133">Transmembrane helix</keyword>
<keyword id="KW-0813">Transport</keyword>
<organism>
    <name type="scientific">Hyphomonas neptunium (strain ATCC 15444)</name>
    <dbReference type="NCBI Taxonomy" id="228405"/>
    <lineage>
        <taxon>Bacteria</taxon>
        <taxon>Pseudomonadati</taxon>
        <taxon>Pseudomonadota</taxon>
        <taxon>Alphaproteobacteria</taxon>
        <taxon>Hyphomonadales</taxon>
        <taxon>Hyphomonadaceae</taxon>
        <taxon>Hyphomonas</taxon>
    </lineage>
</organism>
<protein>
    <recommendedName>
        <fullName evidence="1">Sec-independent protein translocase protein TatB</fullName>
    </recommendedName>
</protein>
<dbReference type="EMBL" id="CP000158">
    <property type="protein sequence ID" value="ABI77969.1"/>
    <property type="molecule type" value="Genomic_DNA"/>
</dbReference>
<dbReference type="RefSeq" id="WP_011646934.1">
    <property type="nucleotide sequence ID" value="NC_008358.1"/>
</dbReference>
<dbReference type="SMR" id="Q0C0V9"/>
<dbReference type="STRING" id="228405.HNE_1933"/>
<dbReference type="KEGG" id="hne:HNE_1933"/>
<dbReference type="eggNOG" id="COG1826">
    <property type="taxonomic scope" value="Bacteria"/>
</dbReference>
<dbReference type="HOGENOM" id="CLU_086034_1_3_5"/>
<dbReference type="Proteomes" id="UP000001959">
    <property type="component" value="Chromosome"/>
</dbReference>
<dbReference type="GO" id="GO:0033281">
    <property type="term" value="C:TAT protein transport complex"/>
    <property type="evidence" value="ECO:0007669"/>
    <property type="project" value="UniProtKB-UniRule"/>
</dbReference>
<dbReference type="GO" id="GO:0008320">
    <property type="term" value="F:protein transmembrane transporter activity"/>
    <property type="evidence" value="ECO:0007669"/>
    <property type="project" value="UniProtKB-UniRule"/>
</dbReference>
<dbReference type="GO" id="GO:0043953">
    <property type="term" value="P:protein transport by the Tat complex"/>
    <property type="evidence" value="ECO:0007669"/>
    <property type="project" value="UniProtKB-UniRule"/>
</dbReference>
<dbReference type="Gene3D" id="1.20.5.3310">
    <property type="match status" value="1"/>
</dbReference>
<dbReference type="HAMAP" id="MF_00237">
    <property type="entry name" value="TatB"/>
    <property type="match status" value="1"/>
</dbReference>
<dbReference type="InterPro" id="IPR003369">
    <property type="entry name" value="TatA/B/E"/>
</dbReference>
<dbReference type="InterPro" id="IPR018448">
    <property type="entry name" value="TatB"/>
</dbReference>
<dbReference type="NCBIfam" id="TIGR01410">
    <property type="entry name" value="tatB"/>
    <property type="match status" value="1"/>
</dbReference>
<dbReference type="PANTHER" id="PTHR33162">
    <property type="entry name" value="SEC-INDEPENDENT PROTEIN TRANSLOCASE PROTEIN TATA, CHLOROPLASTIC"/>
    <property type="match status" value="1"/>
</dbReference>
<dbReference type="PANTHER" id="PTHR33162:SF1">
    <property type="entry name" value="SEC-INDEPENDENT PROTEIN TRANSLOCASE PROTEIN TATA, CHLOROPLASTIC"/>
    <property type="match status" value="1"/>
</dbReference>
<dbReference type="Pfam" id="PF02416">
    <property type="entry name" value="TatA_B_E"/>
    <property type="match status" value="1"/>
</dbReference>
<dbReference type="PRINTS" id="PR01506">
    <property type="entry name" value="TATBPROTEIN"/>
</dbReference>
<gene>
    <name evidence="1" type="primary">tatB</name>
    <name type="ordered locus">HNE_1933</name>
</gene>
<accession>Q0C0V9</accession>
<feature type="chain" id="PRO_0000301179" description="Sec-independent protein translocase protein TatB">
    <location>
        <begin position="1"/>
        <end position="140"/>
    </location>
</feature>
<feature type="transmembrane region" description="Helical" evidence="1">
    <location>
        <begin position="2"/>
        <end position="22"/>
    </location>
</feature>
<feature type="region of interest" description="Disordered" evidence="2">
    <location>
        <begin position="90"/>
        <end position="140"/>
    </location>
</feature>
<feature type="compositionally biased region" description="Pro residues" evidence="2">
    <location>
        <begin position="100"/>
        <end position="119"/>
    </location>
</feature>
<comment type="function">
    <text evidence="1">Part of the twin-arginine translocation (Tat) system that transports large folded proteins containing a characteristic twin-arginine motif in their signal peptide across membranes. Together with TatC, TatB is part of a receptor directly interacting with Tat signal peptides. TatB may form an oligomeric binding site that transiently accommodates folded Tat precursor proteins before their translocation.</text>
</comment>
<comment type="subunit">
    <text evidence="1">The Tat system comprises two distinct complexes: a TatABC complex, containing multiple copies of TatA, TatB and TatC subunits, and a separate TatA complex, containing only TatA subunits. Substrates initially bind to the TatABC complex, which probably triggers association of the separate TatA complex to form the active translocon.</text>
</comment>
<comment type="subcellular location">
    <subcellularLocation>
        <location evidence="1">Cell inner membrane</location>
        <topology evidence="1">Single-pass membrane protein</topology>
    </subcellularLocation>
</comment>
<comment type="similarity">
    <text evidence="1">Belongs to the TatB family.</text>
</comment>
<sequence>MLPGIGFSELLLIGLAALIIIGPKDLPMMMRTLGQLMGKGRRMAREFQAAFDDIARQSELDELKKEIQDLRQSNTFKSAQDDLAAYEADVNSAVMREHPVSPPPPATPPAPPAELPPEAAPHADSQNAPPEADPAKGDRT</sequence>
<proteinExistence type="inferred from homology"/>